<evidence type="ECO:0000255" key="1">
    <source>
        <dbReference type="HAMAP-Rule" id="MF_00189"/>
    </source>
</evidence>
<sequence length="180" mass="20384">MLKLLSEIGPVIAFFAGFFYGGGIQHATLYMLITSVICITLCYVIDKKVSKLSIISTTVLLVSGSITLISGDSMYIKIKPTILYVIFGIIFLMSGIRKNPFIKYALESIVRLKEESWITLSYRTAAFFFFMAVVNEVVWRNCSDETWVKFKVFGVIPITFIFILLQLPLLLKNKLPDSKI</sequence>
<organism>
    <name type="scientific">Rickettsia conorii (strain ATCC VR-613 / Malish 7)</name>
    <dbReference type="NCBI Taxonomy" id="272944"/>
    <lineage>
        <taxon>Bacteria</taxon>
        <taxon>Pseudomonadati</taxon>
        <taxon>Pseudomonadota</taxon>
        <taxon>Alphaproteobacteria</taxon>
        <taxon>Rickettsiales</taxon>
        <taxon>Rickettsiaceae</taxon>
        <taxon>Rickettsieae</taxon>
        <taxon>Rickettsia</taxon>
        <taxon>spotted fever group</taxon>
    </lineage>
</organism>
<keyword id="KW-0997">Cell inner membrane</keyword>
<keyword id="KW-1003">Cell membrane</keyword>
<keyword id="KW-0472">Membrane</keyword>
<keyword id="KW-0812">Transmembrane</keyword>
<keyword id="KW-1133">Transmembrane helix</keyword>
<name>YCIB_RICCN</name>
<gene>
    <name evidence="1" type="primary">yciB</name>
    <name type="ordered locus">RC0539</name>
</gene>
<comment type="function">
    <text evidence="1">Plays a role in cell envelope biogenesis, maintenance of cell envelope integrity and membrane homeostasis.</text>
</comment>
<comment type="subcellular location">
    <subcellularLocation>
        <location evidence="1">Cell inner membrane</location>
        <topology evidence="1">Multi-pass membrane protein</topology>
    </subcellularLocation>
</comment>
<comment type="similarity">
    <text evidence="1">Belongs to the YciB family.</text>
</comment>
<accession>Q92I81</accession>
<proteinExistence type="inferred from homology"/>
<feature type="chain" id="PRO_0000206545" description="Inner membrane-spanning protein YciB">
    <location>
        <begin position="1"/>
        <end position="180"/>
    </location>
</feature>
<feature type="transmembrane region" description="Helical" evidence="1">
    <location>
        <begin position="4"/>
        <end position="24"/>
    </location>
</feature>
<feature type="transmembrane region" description="Helical" evidence="1">
    <location>
        <begin position="25"/>
        <end position="45"/>
    </location>
</feature>
<feature type="transmembrane region" description="Helical" evidence="1">
    <location>
        <begin position="49"/>
        <end position="69"/>
    </location>
</feature>
<feature type="transmembrane region" description="Helical" evidence="1">
    <location>
        <begin position="76"/>
        <end position="96"/>
    </location>
</feature>
<feature type="transmembrane region" description="Helical" evidence="1">
    <location>
        <begin position="118"/>
        <end position="138"/>
    </location>
</feature>
<feature type="transmembrane region" description="Helical" evidence="1">
    <location>
        <begin position="150"/>
        <end position="170"/>
    </location>
</feature>
<dbReference type="EMBL" id="AE006914">
    <property type="protein sequence ID" value="AAL03077.1"/>
    <property type="molecule type" value="Genomic_DNA"/>
</dbReference>
<dbReference type="PIR" id="C97767">
    <property type="entry name" value="C97767"/>
</dbReference>
<dbReference type="RefSeq" id="WP_004995863.1">
    <property type="nucleotide sequence ID" value="NC_003103.1"/>
</dbReference>
<dbReference type="SMR" id="Q92I81"/>
<dbReference type="KEGG" id="rco:RC0539"/>
<dbReference type="HOGENOM" id="CLU_089554_1_1_5"/>
<dbReference type="Proteomes" id="UP000000816">
    <property type="component" value="Chromosome"/>
</dbReference>
<dbReference type="GO" id="GO:0005886">
    <property type="term" value="C:plasma membrane"/>
    <property type="evidence" value="ECO:0007669"/>
    <property type="project" value="UniProtKB-SubCell"/>
</dbReference>
<dbReference type="HAMAP" id="MF_00189">
    <property type="entry name" value="YciB"/>
    <property type="match status" value="1"/>
</dbReference>
<dbReference type="InterPro" id="IPR006008">
    <property type="entry name" value="YciB"/>
</dbReference>
<dbReference type="NCBIfam" id="TIGR00997">
    <property type="entry name" value="ispZ"/>
    <property type="match status" value="1"/>
</dbReference>
<dbReference type="NCBIfam" id="NF001323">
    <property type="entry name" value="PRK00259.1-1"/>
    <property type="match status" value="1"/>
</dbReference>
<dbReference type="PANTHER" id="PTHR36917:SF1">
    <property type="entry name" value="INNER MEMBRANE-SPANNING PROTEIN YCIB"/>
    <property type="match status" value="1"/>
</dbReference>
<dbReference type="PANTHER" id="PTHR36917">
    <property type="entry name" value="INTRACELLULAR SEPTATION PROTEIN A-RELATED"/>
    <property type="match status" value="1"/>
</dbReference>
<dbReference type="Pfam" id="PF04279">
    <property type="entry name" value="IspA"/>
    <property type="match status" value="1"/>
</dbReference>
<protein>
    <recommendedName>
        <fullName evidence="1">Inner membrane-spanning protein YciB</fullName>
    </recommendedName>
</protein>
<reference key="1">
    <citation type="journal article" date="2001" name="Science">
        <title>Mechanisms of evolution in Rickettsia conorii and R. prowazekii.</title>
        <authorList>
            <person name="Ogata H."/>
            <person name="Audic S."/>
            <person name="Renesto-Audiffren P."/>
            <person name="Fournier P.-E."/>
            <person name="Barbe V."/>
            <person name="Samson D."/>
            <person name="Roux V."/>
            <person name="Cossart P."/>
            <person name="Weissenbach J."/>
            <person name="Claverie J.-M."/>
            <person name="Raoult D."/>
        </authorList>
    </citation>
    <scope>NUCLEOTIDE SEQUENCE [LARGE SCALE GENOMIC DNA]</scope>
    <source>
        <strain>ATCC VR-613 / Malish 7</strain>
    </source>
</reference>